<keyword id="KW-0963">Cytoplasm</keyword>
<keyword id="KW-1185">Reference proteome</keyword>
<keyword id="KW-0690">Ribosome biogenesis</keyword>
<proteinExistence type="inferred from homology"/>
<protein>
    <recommendedName>
        <fullName evidence="1">Ribosome-binding factor A</fullName>
    </recommendedName>
</protein>
<organism>
    <name type="scientific">Alkaliphilus metalliredigens (strain QYMF)</name>
    <dbReference type="NCBI Taxonomy" id="293826"/>
    <lineage>
        <taxon>Bacteria</taxon>
        <taxon>Bacillati</taxon>
        <taxon>Bacillota</taxon>
        <taxon>Clostridia</taxon>
        <taxon>Peptostreptococcales</taxon>
        <taxon>Natronincolaceae</taxon>
        <taxon>Alkaliphilus</taxon>
    </lineage>
</organism>
<feature type="chain" id="PRO_0000321199" description="Ribosome-binding factor A">
    <location>
        <begin position="1"/>
        <end position="138"/>
    </location>
</feature>
<feature type="region of interest" description="Disordered" evidence="2">
    <location>
        <begin position="119"/>
        <end position="138"/>
    </location>
</feature>
<accession>A6TRK6</accession>
<evidence type="ECO:0000255" key="1">
    <source>
        <dbReference type="HAMAP-Rule" id="MF_00003"/>
    </source>
</evidence>
<evidence type="ECO:0000256" key="2">
    <source>
        <dbReference type="SAM" id="MobiDB-lite"/>
    </source>
</evidence>
<name>RBFA_ALKMQ</name>
<gene>
    <name evidence="1" type="primary">rbfA</name>
    <name type="ordered locus">Amet_2672</name>
</gene>
<sequence length="138" mass="16098">MSALAYPRVNRLAEEIKKIISHMIRNDLRDPRIAKMTSIIEVNVTRDLRFATIYISVLGDQQEKEETIEGLKKSSGFIRKEVGRQITARFTPELIFKLDESIERGVYMYDVISKVTQKDMDEKKNSDEKRDSDEKLED</sequence>
<dbReference type="EMBL" id="CP000724">
    <property type="protein sequence ID" value="ABR48824.1"/>
    <property type="molecule type" value="Genomic_DNA"/>
</dbReference>
<dbReference type="RefSeq" id="WP_012063797.1">
    <property type="nucleotide sequence ID" value="NC_009633.1"/>
</dbReference>
<dbReference type="SMR" id="A6TRK6"/>
<dbReference type="STRING" id="293826.Amet_2672"/>
<dbReference type="KEGG" id="amt:Amet_2672"/>
<dbReference type="eggNOG" id="COG0858">
    <property type="taxonomic scope" value="Bacteria"/>
</dbReference>
<dbReference type="HOGENOM" id="CLU_089475_5_2_9"/>
<dbReference type="OrthoDB" id="307788at2"/>
<dbReference type="Proteomes" id="UP000001572">
    <property type="component" value="Chromosome"/>
</dbReference>
<dbReference type="GO" id="GO:0005829">
    <property type="term" value="C:cytosol"/>
    <property type="evidence" value="ECO:0007669"/>
    <property type="project" value="TreeGrafter"/>
</dbReference>
<dbReference type="GO" id="GO:0043024">
    <property type="term" value="F:ribosomal small subunit binding"/>
    <property type="evidence" value="ECO:0007669"/>
    <property type="project" value="TreeGrafter"/>
</dbReference>
<dbReference type="GO" id="GO:0030490">
    <property type="term" value="P:maturation of SSU-rRNA"/>
    <property type="evidence" value="ECO:0007669"/>
    <property type="project" value="UniProtKB-UniRule"/>
</dbReference>
<dbReference type="Gene3D" id="3.30.300.20">
    <property type="match status" value="1"/>
</dbReference>
<dbReference type="HAMAP" id="MF_00003">
    <property type="entry name" value="RbfA"/>
    <property type="match status" value="1"/>
</dbReference>
<dbReference type="InterPro" id="IPR015946">
    <property type="entry name" value="KH_dom-like_a/b"/>
</dbReference>
<dbReference type="InterPro" id="IPR000238">
    <property type="entry name" value="RbfA"/>
</dbReference>
<dbReference type="InterPro" id="IPR023799">
    <property type="entry name" value="RbfA_dom_sf"/>
</dbReference>
<dbReference type="NCBIfam" id="TIGR00082">
    <property type="entry name" value="rbfA"/>
    <property type="match status" value="1"/>
</dbReference>
<dbReference type="PANTHER" id="PTHR33515">
    <property type="entry name" value="RIBOSOME-BINDING FACTOR A, CHLOROPLASTIC-RELATED"/>
    <property type="match status" value="1"/>
</dbReference>
<dbReference type="PANTHER" id="PTHR33515:SF1">
    <property type="entry name" value="RIBOSOME-BINDING FACTOR A, CHLOROPLASTIC-RELATED"/>
    <property type="match status" value="1"/>
</dbReference>
<dbReference type="Pfam" id="PF02033">
    <property type="entry name" value="RBFA"/>
    <property type="match status" value="1"/>
</dbReference>
<dbReference type="SUPFAM" id="SSF89919">
    <property type="entry name" value="Ribosome-binding factor A, RbfA"/>
    <property type="match status" value="1"/>
</dbReference>
<reference key="1">
    <citation type="journal article" date="2016" name="Genome Announc.">
        <title>Complete genome sequence of Alkaliphilus metalliredigens strain QYMF, an alkaliphilic and metal-reducing bacterium isolated from borax-contaminated leachate ponds.</title>
        <authorList>
            <person name="Hwang C."/>
            <person name="Copeland A."/>
            <person name="Lucas S."/>
            <person name="Lapidus A."/>
            <person name="Barry K."/>
            <person name="Detter J.C."/>
            <person name="Glavina Del Rio T."/>
            <person name="Hammon N."/>
            <person name="Israni S."/>
            <person name="Dalin E."/>
            <person name="Tice H."/>
            <person name="Pitluck S."/>
            <person name="Chertkov O."/>
            <person name="Brettin T."/>
            <person name="Bruce D."/>
            <person name="Han C."/>
            <person name="Schmutz J."/>
            <person name="Larimer F."/>
            <person name="Land M.L."/>
            <person name="Hauser L."/>
            <person name="Kyrpides N."/>
            <person name="Mikhailova N."/>
            <person name="Ye Q."/>
            <person name="Zhou J."/>
            <person name="Richardson P."/>
            <person name="Fields M.W."/>
        </authorList>
    </citation>
    <scope>NUCLEOTIDE SEQUENCE [LARGE SCALE GENOMIC DNA]</scope>
    <source>
        <strain>QYMF</strain>
    </source>
</reference>
<comment type="function">
    <text evidence="1">One of several proteins that assist in the late maturation steps of the functional core of the 30S ribosomal subunit. Associates with free 30S ribosomal subunits (but not with 30S subunits that are part of 70S ribosomes or polysomes). Required for efficient processing of 16S rRNA. May interact with the 5'-terminal helix region of 16S rRNA.</text>
</comment>
<comment type="subunit">
    <text evidence="1">Monomer. Binds 30S ribosomal subunits, but not 50S ribosomal subunits or 70S ribosomes.</text>
</comment>
<comment type="subcellular location">
    <subcellularLocation>
        <location evidence="1">Cytoplasm</location>
    </subcellularLocation>
</comment>
<comment type="similarity">
    <text evidence="1">Belongs to the RbfA family.</text>
</comment>